<gene>
    <name type="ordered locus">Os01g0505400</name>
    <name type="ordered locus">LOC_Os01g32080</name>
</gene>
<organism>
    <name type="scientific">Oryza sativa subsp. japonica</name>
    <name type="common">Rice</name>
    <dbReference type="NCBI Taxonomy" id="39947"/>
    <lineage>
        <taxon>Eukaryota</taxon>
        <taxon>Viridiplantae</taxon>
        <taxon>Streptophyta</taxon>
        <taxon>Embryophyta</taxon>
        <taxon>Tracheophyta</taxon>
        <taxon>Spermatophyta</taxon>
        <taxon>Magnoliopsida</taxon>
        <taxon>Liliopsida</taxon>
        <taxon>Poales</taxon>
        <taxon>Poaceae</taxon>
        <taxon>BOP clade</taxon>
        <taxon>Oryzoideae</taxon>
        <taxon>Oryzeae</taxon>
        <taxon>Oryzinae</taxon>
        <taxon>Oryza</taxon>
        <taxon>Oryza sativa</taxon>
    </lineage>
</organism>
<protein>
    <recommendedName>
        <fullName>2-hydroxyacyl-CoA lyase</fullName>
        <ecNumber evidence="3">4.1.2.63</ecNumber>
    </recommendedName>
    <alternativeName>
        <fullName>2-hydroxyphytanoyl-CoA lyase</fullName>
        <shortName>2-HPCL</shortName>
    </alternativeName>
    <alternativeName>
        <fullName>Oxalyl-CoA decarboxylase</fullName>
    </alternativeName>
</protein>
<name>HACL_ORYSJ</name>
<proteinExistence type="inferred from homology"/>
<evidence type="ECO:0000250" key="1"/>
<evidence type="ECO:0000250" key="2">
    <source>
        <dbReference type="UniProtKB" id="P40149"/>
    </source>
</evidence>
<evidence type="ECO:0000250" key="3">
    <source>
        <dbReference type="UniProtKB" id="Q9UJ83"/>
    </source>
</evidence>
<evidence type="ECO:0000305" key="4"/>
<comment type="function">
    <text evidence="1">Catalyzes a carbon-carbon cleavage reaction; cleaves a 2-hydroxy-3-methylacyl-CoA into formyl-CoA and a 2-methyl-branched fatty aldehyde.</text>
</comment>
<comment type="catalytic activity">
    <reaction evidence="3">
        <text>an (R)-2-hydroxy-long-chain-fatty acyl-CoA = a long-chain fatty aldehyde + formyl-CoA</text>
        <dbReference type="Rhea" id="RHEA:67444"/>
        <dbReference type="ChEBI" id="CHEBI:17176"/>
        <dbReference type="ChEBI" id="CHEBI:57376"/>
        <dbReference type="ChEBI" id="CHEBI:170012"/>
        <dbReference type="EC" id="4.1.2.63"/>
    </reaction>
    <physiologicalReaction direction="left-to-right" evidence="3">
        <dbReference type="Rhea" id="RHEA:67445"/>
    </physiologicalReaction>
</comment>
<comment type="catalytic activity">
    <reaction evidence="3">
        <text>a 2-hydroxy-3-methyl fatty acyl-CoA = a 2-methyl-branched fatty aldehyde + formyl-CoA</text>
        <dbReference type="Rhea" id="RHEA:25375"/>
        <dbReference type="ChEBI" id="CHEBI:49188"/>
        <dbReference type="ChEBI" id="CHEBI:57376"/>
        <dbReference type="ChEBI" id="CHEBI:58783"/>
        <dbReference type="EC" id="4.1.2.63"/>
    </reaction>
    <physiologicalReaction direction="left-to-right" evidence="3">
        <dbReference type="Rhea" id="RHEA:25376"/>
    </physiologicalReaction>
</comment>
<comment type="cofactor">
    <cofactor evidence="1">
        <name>Mg(2+)</name>
        <dbReference type="ChEBI" id="CHEBI:18420"/>
    </cofactor>
    <text evidence="1">Binds 1 Mg(2+) ion per subunit.</text>
</comment>
<comment type="cofactor">
    <cofactor evidence="1">
        <name>thiamine diphosphate</name>
        <dbReference type="ChEBI" id="CHEBI:58937"/>
    </cofactor>
    <text evidence="1">Binds 1 thiamine pyrophosphate per subunit.</text>
</comment>
<comment type="subunit">
    <text evidence="1">Homotetramer.</text>
</comment>
<comment type="similarity">
    <text evidence="4">Belongs to the TPP enzyme family.</text>
</comment>
<comment type="sequence caution" evidence="4">
    <conflict type="erroneous gene model prediction">
        <sequence resource="EMBL-CDS" id="BAF05058"/>
    </conflict>
</comment>
<sequence length="577" mass="60826">MATDTAAPAAMKVDGSALAGRALAAAGARHMFGVVGIPVTSLASRAAAAGVRFLAFRNEQSAGYAAAAYGFLTGSPGLLLTVSGPGCVHGLAGLSHATANAWPLLMVSGSCSQPDAGRGDFQELDQIAATKPFIKIAVKATTIADIPRLVFQALAATVSGRPGGCYLDIPSDVLHQTLTESEAAALIDAAAADSAKSDSSPPKHKSLDEGIEKAAELLRRAERPLVVFGKGAAYSRAEDAIWKLVDTTGIPFLPTPMGKGVVPDTHPLSATAARSLAIGQCDVALVVGARLNWLLHFGEPPKWSKDVKFILVDVCEEEIELRKPHVGIVGDAKRVVELINREIKDQPFCLAPSHPWVEAITKKARDNVLKMEAQLAKDVVPFNFLTPLRIIRDAILAEGNPAPVVVSEGANTMDVGRAVLVQNEPRTRLDAGTWGTMGVGLGFCVAAAVAEPDRLVVAVEGDSGFGFSAMEVETLVRYQLPVVVIVFNNNGVYGGDRRSPDEITGPYKDDPAPTSFVPAAGYHKMMEAFGGKGYLVETPDELKSALSESFRARKPAVINVIIDPYAGAESGRMQHKN</sequence>
<accession>Q0JMH0</accession>
<keyword id="KW-0456">Lyase</keyword>
<keyword id="KW-0460">Magnesium</keyword>
<keyword id="KW-0479">Metal-binding</keyword>
<keyword id="KW-1185">Reference proteome</keyword>
<keyword id="KW-0786">Thiamine pyrophosphate</keyword>
<reference key="1">
    <citation type="journal article" date="2005" name="Nature">
        <title>The map-based sequence of the rice genome.</title>
        <authorList>
            <consortium name="International rice genome sequencing project (IRGSP)"/>
        </authorList>
    </citation>
    <scope>NUCLEOTIDE SEQUENCE [LARGE SCALE GENOMIC DNA]</scope>
    <source>
        <strain>cv. Nipponbare</strain>
    </source>
</reference>
<reference key="2">
    <citation type="journal article" date="2008" name="Nucleic Acids Res.">
        <title>The rice annotation project database (RAP-DB): 2008 update.</title>
        <authorList>
            <consortium name="The rice annotation project (RAP)"/>
        </authorList>
    </citation>
    <scope>GENOME REANNOTATION</scope>
    <source>
        <strain>cv. Nipponbare</strain>
    </source>
</reference>
<reference key="3">
    <citation type="journal article" date="2013" name="Rice">
        <title>Improvement of the Oryza sativa Nipponbare reference genome using next generation sequence and optical map data.</title>
        <authorList>
            <person name="Kawahara Y."/>
            <person name="de la Bastide M."/>
            <person name="Hamilton J.P."/>
            <person name="Kanamori H."/>
            <person name="McCombie W.R."/>
            <person name="Ouyang S."/>
            <person name="Schwartz D.C."/>
            <person name="Tanaka T."/>
            <person name="Wu J."/>
            <person name="Zhou S."/>
            <person name="Childs K.L."/>
            <person name="Davidson R.M."/>
            <person name="Lin H."/>
            <person name="Quesada-Ocampo L."/>
            <person name="Vaillancourt B."/>
            <person name="Sakai H."/>
            <person name="Lee S.S."/>
            <person name="Kim J."/>
            <person name="Numa H."/>
            <person name="Itoh T."/>
            <person name="Buell C.R."/>
            <person name="Matsumoto T."/>
        </authorList>
    </citation>
    <scope>GENOME REANNOTATION</scope>
    <source>
        <strain>cv. Nipponbare</strain>
    </source>
</reference>
<feature type="chain" id="PRO_0000424907" description="2-hydroxyacyl-CoA lyase">
    <location>
        <begin position="1"/>
        <end position="577"/>
    </location>
</feature>
<feature type="region of interest" description="Thiamine pyrophosphate binding" evidence="1">
    <location>
        <begin position="412"/>
        <end position="493"/>
    </location>
</feature>
<feature type="binding site" evidence="2">
    <location>
        <position position="59"/>
    </location>
    <ligand>
        <name>thiamine diphosphate</name>
        <dbReference type="ChEBI" id="CHEBI:58937"/>
    </ligand>
</feature>
<feature type="binding site" evidence="2">
    <location>
        <position position="462"/>
    </location>
    <ligand>
        <name>Mg(2+)</name>
        <dbReference type="ChEBI" id="CHEBI:18420"/>
    </ligand>
</feature>
<feature type="binding site" evidence="2">
    <location>
        <position position="489"/>
    </location>
    <ligand>
        <name>Mg(2+)</name>
        <dbReference type="ChEBI" id="CHEBI:18420"/>
    </ligand>
</feature>
<dbReference type="EC" id="4.1.2.63" evidence="3"/>
<dbReference type="EMBL" id="AP008207">
    <property type="protein sequence ID" value="BAF05058.2"/>
    <property type="status" value="ALT_SEQ"/>
    <property type="molecule type" value="Genomic_DNA"/>
</dbReference>
<dbReference type="EMBL" id="AP014957">
    <property type="status" value="NOT_ANNOTATED_CDS"/>
    <property type="molecule type" value="Genomic_DNA"/>
</dbReference>
<dbReference type="RefSeq" id="XP_015616825.1">
    <property type="nucleotide sequence ID" value="XM_015761339.1"/>
</dbReference>
<dbReference type="SMR" id="Q0JMH0"/>
<dbReference type="FunCoup" id="Q0JMH0">
    <property type="interactions" value="2514"/>
</dbReference>
<dbReference type="STRING" id="39947.Q0JMH0"/>
<dbReference type="PaxDb" id="39947-Q0JMH0"/>
<dbReference type="KEGG" id="dosa:Os01g0505400"/>
<dbReference type="eggNOG" id="KOG1185">
    <property type="taxonomic scope" value="Eukaryota"/>
</dbReference>
<dbReference type="HOGENOM" id="CLU_3194166_0_0_1"/>
<dbReference type="InParanoid" id="Q0JMH0"/>
<dbReference type="OrthoDB" id="3633556at2759"/>
<dbReference type="Proteomes" id="UP000000763">
    <property type="component" value="Chromosome 1"/>
</dbReference>
<dbReference type="Proteomes" id="UP000059680">
    <property type="component" value="Chromosome 1"/>
</dbReference>
<dbReference type="GO" id="GO:0005777">
    <property type="term" value="C:peroxisome"/>
    <property type="evidence" value="ECO:0000318"/>
    <property type="project" value="GO_Central"/>
</dbReference>
<dbReference type="GO" id="GO:0106359">
    <property type="term" value="F:2-hydroxyacyl-CoA lyase activity"/>
    <property type="evidence" value="ECO:0007669"/>
    <property type="project" value="RHEA"/>
</dbReference>
<dbReference type="GO" id="GO:0000287">
    <property type="term" value="F:magnesium ion binding"/>
    <property type="evidence" value="ECO:0007669"/>
    <property type="project" value="InterPro"/>
</dbReference>
<dbReference type="GO" id="GO:0030976">
    <property type="term" value="F:thiamine pyrophosphate binding"/>
    <property type="evidence" value="ECO:0000318"/>
    <property type="project" value="GO_Central"/>
</dbReference>
<dbReference type="GO" id="GO:0001561">
    <property type="term" value="P:fatty acid alpha-oxidation"/>
    <property type="evidence" value="ECO:0000318"/>
    <property type="project" value="GO_Central"/>
</dbReference>
<dbReference type="CDD" id="cd02004">
    <property type="entry name" value="TPP_BZL_OCoD_HPCL"/>
    <property type="match status" value="1"/>
</dbReference>
<dbReference type="CDD" id="cd07035">
    <property type="entry name" value="TPP_PYR_POX_like"/>
    <property type="match status" value="1"/>
</dbReference>
<dbReference type="FunFam" id="3.40.50.1220:FF:000024">
    <property type="entry name" value="2-hydroxyacyl-CoA lyase"/>
    <property type="match status" value="1"/>
</dbReference>
<dbReference type="FunFam" id="3.40.50.970:FF:000050">
    <property type="entry name" value="2-hydroxyacyl-CoA lyase"/>
    <property type="match status" value="1"/>
</dbReference>
<dbReference type="FunFam" id="3.40.50.970:FF:000046">
    <property type="entry name" value="2-hydroxyacyl-CoA lyase 1"/>
    <property type="match status" value="1"/>
</dbReference>
<dbReference type="Gene3D" id="3.40.50.970">
    <property type="match status" value="2"/>
</dbReference>
<dbReference type="Gene3D" id="3.40.50.1220">
    <property type="entry name" value="TPP-binding domain"/>
    <property type="match status" value="1"/>
</dbReference>
<dbReference type="InterPro" id="IPR029035">
    <property type="entry name" value="DHS-like_NAD/FAD-binding_dom"/>
</dbReference>
<dbReference type="InterPro" id="IPR045025">
    <property type="entry name" value="HACL1-like"/>
</dbReference>
<dbReference type="InterPro" id="IPR029061">
    <property type="entry name" value="THDP-binding"/>
</dbReference>
<dbReference type="InterPro" id="IPR012000">
    <property type="entry name" value="Thiamin_PyroP_enz_cen_dom"/>
</dbReference>
<dbReference type="InterPro" id="IPR012001">
    <property type="entry name" value="Thiamin_PyroP_enz_TPP-bd_dom"/>
</dbReference>
<dbReference type="InterPro" id="IPR000399">
    <property type="entry name" value="TPP-bd_CS"/>
</dbReference>
<dbReference type="InterPro" id="IPR011766">
    <property type="entry name" value="TPP_enzyme_TPP-bd"/>
</dbReference>
<dbReference type="NCBIfam" id="NF006721">
    <property type="entry name" value="PRK09259.1"/>
    <property type="match status" value="1"/>
</dbReference>
<dbReference type="PANTHER" id="PTHR43710">
    <property type="entry name" value="2-HYDROXYACYL-COA LYASE"/>
    <property type="match status" value="1"/>
</dbReference>
<dbReference type="PANTHER" id="PTHR43710:SF2">
    <property type="entry name" value="2-HYDROXYACYL-COA LYASE 1"/>
    <property type="match status" value="1"/>
</dbReference>
<dbReference type="Pfam" id="PF02775">
    <property type="entry name" value="TPP_enzyme_C"/>
    <property type="match status" value="1"/>
</dbReference>
<dbReference type="Pfam" id="PF00205">
    <property type="entry name" value="TPP_enzyme_M"/>
    <property type="match status" value="1"/>
</dbReference>
<dbReference type="Pfam" id="PF02776">
    <property type="entry name" value="TPP_enzyme_N"/>
    <property type="match status" value="1"/>
</dbReference>
<dbReference type="SUPFAM" id="SSF52467">
    <property type="entry name" value="DHS-like NAD/FAD-binding domain"/>
    <property type="match status" value="1"/>
</dbReference>
<dbReference type="SUPFAM" id="SSF52518">
    <property type="entry name" value="Thiamin diphosphate-binding fold (THDP-binding)"/>
    <property type="match status" value="2"/>
</dbReference>
<dbReference type="PROSITE" id="PS00187">
    <property type="entry name" value="TPP_ENZYMES"/>
    <property type="match status" value="1"/>
</dbReference>